<comment type="function">
    <text evidence="1">Bidirectionally degrades single-stranded DNA into large acid-insoluble oligonucleotides, which are then degraded further into small acid-soluble oligonucleotides.</text>
</comment>
<comment type="catalytic activity">
    <reaction evidence="1">
        <text>Exonucleolytic cleavage in either 5'- to 3'- or 3'- to 5'-direction to yield nucleoside 5'-phosphates.</text>
        <dbReference type="EC" id="3.1.11.6"/>
    </reaction>
</comment>
<comment type="subunit">
    <text evidence="1">Heterooligomer composed of large and small subunits.</text>
</comment>
<comment type="subcellular location">
    <subcellularLocation>
        <location evidence="1">Cytoplasm</location>
    </subcellularLocation>
</comment>
<comment type="similarity">
    <text evidence="1">Belongs to the XseA family.</text>
</comment>
<dbReference type="EC" id="3.1.11.6" evidence="1"/>
<dbReference type="EMBL" id="AE014184">
    <property type="protein sequence ID" value="AAO44740.1"/>
    <property type="molecule type" value="Genomic_DNA"/>
</dbReference>
<dbReference type="RefSeq" id="WP_011096602.1">
    <property type="nucleotide sequence ID" value="NC_004572.3"/>
</dbReference>
<dbReference type="SMR" id="Q83FR7"/>
<dbReference type="STRING" id="203267.TWT_643"/>
<dbReference type="KEGG" id="twh:TWT_643"/>
<dbReference type="eggNOG" id="COG1570">
    <property type="taxonomic scope" value="Bacteria"/>
</dbReference>
<dbReference type="HOGENOM" id="CLU_023625_2_1_11"/>
<dbReference type="OrthoDB" id="9802795at2"/>
<dbReference type="Proteomes" id="UP000002200">
    <property type="component" value="Chromosome"/>
</dbReference>
<dbReference type="GO" id="GO:0005737">
    <property type="term" value="C:cytoplasm"/>
    <property type="evidence" value="ECO:0007669"/>
    <property type="project" value="UniProtKB-SubCell"/>
</dbReference>
<dbReference type="GO" id="GO:0009318">
    <property type="term" value="C:exodeoxyribonuclease VII complex"/>
    <property type="evidence" value="ECO:0007669"/>
    <property type="project" value="InterPro"/>
</dbReference>
<dbReference type="GO" id="GO:0008855">
    <property type="term" value="F:exodeoxyribonuclease VII activity"/>
    <property type="evidence" value="ECO:0007669"/>
    <property type="project" value="UniProtKB-UniRule"/>
</dbReference>
<dbReference type="GO" id="GO:0003676">
    <property type="term" value="F:nucleic acid binding"/>
    <property type="evidence" value="ECO:0007669"/>
    <property type="project" value="InterPro"/>
</dbReference>
<dbReference type="GO" id="GO:0006308">
    <property type="term" value="P:DNA catabolic process"/>
    <property type="evidence" value="ECO:0007669"/>
    <property type="project" value="UniProtKB-UniRule"/>
</dbReference>
<dbReference type="CDD" id="cd04489">
    <property type="entry name" value="ExoVII_LU_OBF"/>
    <property type="match status" value="1"/>
</dbReference>
<dbReference type="HAMAP" id="MF_00378">
    <property type="entry name" value="Exonuc_7_L"/>
    <property type="match status" value="1"/>
</dbReference>
<dbReference type="InterPro" id="IPR003753">
    <property type="entry name" value="Exonuc_VII_L"/>
</dbReference>
<dbReference type="InterPro" id="IPR020579">
    <property type="entry name" value="Exonuc_VII_lsu_C"/>
</dbReference>
<dbReference type="InterPro" id="IPR025824">
    <property type="entry name" value="OB-fold_nuc-bd_dom"/>
</dbReference>
<dbReference type="NCBIfam" id="TIGR00237">
    <property type="entry name" value="xseA"/>
    <property type="match status" value="1"/>
</dbReference>
<dbReference type="PANTHER" id="PTHR30008">
    <property type="entry name" value="EXODEOXYRIBONUCLEASE 7 LARGE SUBUNIT"/>
    <property type="match status" value="1"/>
</dbReference>
<dbReference type="PANTHER" id="PTHR30008:SF0">
    <property type="entry name" value="EXODEOXYRIBONUCLEASE 7 LARGE SUBUNIT"/>
    <property type="match status" value="1"/>
</dbReference>
<dbReference type="Pfam" id="PF02601">
    <property type="entry name" value="Exonuc_VII_L"/>
    <property type="match status" value="2"/>
</dbReference>
<dbReference type="Pfam" id="PF13742">
    <property type="entry name" value="tRNA_anti_2"/>
    <property type="match status" value="1"/>
</dbReference>
<keyword id="KW-0963">Cytoplasm</keyword>
<keyword id="KW-0269">Exonuclease</keyword>
<keyword id="KW-0378">Hydrolase</keyword>
<keyword id="KW-0540">Nuclease</keyword>
<keyword id="KW-1185">Reference proteome</keyword>
<name>EX7L_TROWT</name>
<feature type="chain" id="PRO_0000273699" description="Exodeoxyribonuclease 7 large subunit">
    <location>
        <begin position="1"/>
        <end position="404"/>
    </location>
</feature>
<accession>Q83FR7</accession>
<sequence>MDMQADEMYRQDPLGSCGNPRQVSHITGRLSSLLGELPATWIEGEVTQLSPRRIGVFLTLKDMNESKHLEFFLPFDAFKDEVEVGNRVKIHGKLEFWATSGQIKVKGFEIQSVGIGELIERIARLRVQLALEGLYEHKRPLPFIPKLIGLVTGQNSDAEKDVVTNVLLRWPAAKFCTIYASMQGASCVSETISAIQKLDANNDVDVIIVARGGGSFHDLIGFSDEQMIRAVFAIKTPLISAIGHEADRPILDEVADLRASTPTDAAKRVVPDIADEKRLIKSAMSFLKKSYEPVIDKIKCDTLSWSQAFSNPFETFIAPRRREIDLFYQQMLTVVWANFSKTETEIAAIKKHLLAISPQNTLVRGYAMIEDETGRIISSADKLSAGDTVTLRLHDGLVRAEITQ</sequence>
<reference key="1">
    <citation type="journal article" date="2003" name="Genome Res.">
        <title>Tropheryma whipplei twist: a human pathogenic Actinobacteria with a reduced genome.</title>
        <authorList>
            <person name="Raoult D."/>
            <person name="Ogata H."/>
            <person name="Audic S."/>
            <person name="Robert C."/>
            <person name="Suhre K."/>
            <person name="Drancourt M."/>
            <person name="Claverie J.-M."/>
        </authorList>
    </citation>
    <scope>NUCLEOTIDE SEQUENCE [LARGE SCALE GENOMIC DNA]</scope>
    <source>
        <strain>Twist</strain>
    </source>
</reference>
<proteinExistence type="inferred from homology"/>
<evidence type="ECO:0000255" key="1">
    <source>
        <dbReference type="HAMAP-Rule" id="MF_00378"/>
    </source>
</evidence>
<gene>
    <name evidence="1" type="primary">xseA</name>
    <name type="ordered locus">TWT_643</name>
</gene>
<organism>
    <name type="scientific">Tropheryma whipplei (strain Twist)</name>
    <name type="common">Whipple's bacillus</name>
    <dbReference type="NCBI Taxonomy" id="203267"/>
    <lineage>
        <taxon>Bacteria</taxon>
        <taxon>Bacillati</taxon>
        <taxon>Actinomycetota</taxon>
        <taxon>Actinomycetes</taxon>
        <taxon>Micrococcales</taxon>
        <taxon>Tropherymataceae</taxon>
        <taxon>Tropheryma</taxon>
    </lineage>
</organism>
<protein>
    <recommendedName>
        <fullName evidence="1">Exodeoxyribonuclease 7 large subunit</fullName>
        <ecNumber evidence="1">3.1.11.6</ecNumber>
    </recommendedName>
    <alternativeName>
        <fullName evidence="1">Exodeoxyribonuclease VII large subunit</fullName>
        <shortName evidence="1">Exonuclease VII large subunit</shortName>
    </alternativeName>
</protein>